<gene>
    <name type="primary">TUBB4</name>
    <name type="synonym">TUB4</name>
    <name type="ordered locus">At5g44340</name>
    <name type="ORF">K9L2.12</name>
</gene>
<keyword id="KW-0963">Cytoplasm</keyword>
<keyword id="KW-0206">Cytoskeleton</keyword>
<keyword id="KW-0342">GTP-binding</keyword>
<keyword id="KW-0460">Magnesium</keyword>
<keyword id="KW-0479">Metal-binding</keyword>
<keyword id="KW-0493">Microtubule</keyword>
<keyword id="KW-0547">Nucleotide-binding</keyword>
<keyword id="KW-1185">Reference proteome</keyword>
<accession>P24636</accession>
<accession>Q9FKV4</accession>
<comment type="function">
    <text>Tubulin is the major constituent of microtubules, a cylinder consisting of laterally associated linear protofilaments composed of alpha- and beta-tubulin heterodimers. Microtubules grow by the addition of GTP-tubulin dimers to the microtubule end, where a stabilizing cap forms. Below the cap, tubulin dimers are in GDP-bound state, owing to GTPase activity of alpha-tubulin.</text>
</comment>
<comment type="cofactor">
    <cofactor evidence="1">
        <name>Mg(2+)</name>
        <dbReference type="ChEBI" id="CHEBI:18420"/>
    </cofactor>
</comment>
<comment type="subunit">
    <text>Dimer of alpha and beta chains. A typical microtubule is a hollow water-filled tube with an outer diameter of 25 nm and an inner diameter of 15 nM. Alpha-beta heterodimers associate head-to-tail to form protofilaments running lengthwise along the microtubule wall with the beta-tubulin subunit facing the microtubule plus end conferring a structural polarity. Microtubules usually have 13 protofilaments but different protofilament numbers can be found in some organisms and specialized cells.</text>
</comment>
<comment type="subcellular location">
    <subcellularLocation>
        <location>Cytoplasm</location>
        <location>Cytoskeleton</location>
    </subcellularLocation>
</comment>
<comment type="miscellaneous">
    <text>There are nine genes coding for beta-tubulin.</text>
</comment>
<comment type="similarity">
    <text evidence="3">Belongs to the tubulin family.</text>
</comment>
<proteinExistence type="evidence at transcript level"/>
<feature type="chain" id="PRO_0000048323" description="Tubulin beta-4 chain">
    <location>
        <begin position="1"/>
        <end position="444"/>
    </location>
</feature>
<feature type="binding site" evidence="2">
    <location>
        <position position="11"/>
    </location>
    <ligand>
        <name>GTP</name>
        <dbReference type="ChEBI" id="CHEBI:37565"/>
    </ligand>
</feature>
<feature type="binding site" evidence="1">
    <location>
        <position position="69"/>
    </location>
    <ligand>
        <name>GTP</name>
        <dbReference type="ChEBI" id="CHEBI:37565"/>
    </ligand>
</feature>
<feature type="binding site" evidence="1">
    <location>
        <position position="69"/>
    </location>
    <ligand>
        <name>Mg(2+)</name>
        <dbReference type="ChEBI" id="CHEBI:18420"/>
    </ligand>
</feature>
<feature type="binding site" evidence="2">
    <location>
        <position position="138"/>
    </location>
    <ligand>
        <name>GTP</name>
        <dbReference type="ChEBI" id="CHEBI:37565"/>
    </ligand>
</feature>
<feature type="binding site" evidence="2">
    <location>
        <position position="142"/>
    </location>
    <ligand>
        <name>GTP</name>
        <dbReference type="ChEBI" id="CHEBI:37565"/>
    </ligand>
</feature>
<feature type="binding site" evidence="2">
    <location>
        <position position="143"/>
    </location>
    <ligand>
        <name>GTP</name>
        <dbReference type="ChEBI" id="CHEBI:37565"/>
    </ligand>
</feature>
<feature type="binding site" evidence="2">
    <location>
        <position position="144"/>
    </location>
    <ligand>
        <name>GTP</name>
        <dbReference type="ChEBI" id="CHEBI:37565"/>
    </ligand>
</feature>
<feature type="binding site" evidence="2">
    <location>
        <position position="204"/>
    </location>
    <ligand>
        <name>GTP</name>
        <dbReference type="ChEBI" id="CHEBI:37565"/>
    </ligand>
</feature>
<feature type="binding site" evidence="2">
    <location>
        <position position="226"/>
    </location>
    <ligand>
        <name>GTP</name>
        <dbReference type="ChEBI" id="CHEBI:37565"/>
    </ligand>
</feature>
<feature type="sequence conflict" description="In Ref. 1; AAA32757." evidence="3" ref="1">
    <original>A</original>
    <variation>R</variation>
    <location>
        <position position="313"/>
    </location>
</feature>
<reference key="1">
    <citation type="journal article" date="1987" name="Plant Mol. Biol.">
        <title>The relatively large beta-tubulin gene family of Arabidopsis contains a member with an unusual transcribed 5' noncoding sequence.</title>
        <authorList>
            <person name="Marks M.D."/>
            <person name="West J."/>
            <person name="Weeks D.P."/>
        </authorList>
        <dbReference type="AGRICOLA" id="IND92001182"/>
    </citation>
    <scope>NUCLEOTIDE SEQUENCE</scope>
</reference>
<reference key="2">
    <citation type="journal article" date="1998" name="DNA Res.">
        <title>Structural analysis of Arabidopsis thaliana chromosome 5. V. Sequence features of the regions of 1,381,565 bp covered by twenty one physically assigned P1 and TAC clones.</title>
        <authorList>
            <person name="Kaneko T."/>
            <person name="Kotani H."/>
            <person name="Nakamura Y."/>
            <person name="Sato S."/>
            <person name="Asamizu E."/>
            <person name="Miyajima N."/>
            <person name="Tabata S."/>
        </authorList>
    </citation>
    <scope>NUCLEOTIDE SEQUENCE [LARGE SCALE GENOMIC DNA]</scope>
    <source>
        <strain>cv. Columbia</strain>
    </source>
</reference>
<reference key="3">
    <citation type="journal article" date="2017" name="Plant J.">
        <title>Araport11: a complete reannotation of the Arabidopsis thaliana reference genome.</title>
        <authorList>
            <person name="Cheng C.Y."/>
            <person name="Krishnakumar V."/>
            <person name="Chan A.P."/>
            <person name="Thibaud-Nissen F."/>
            <person name="Schobel S."/>
            <person name="Town C.D."/>
        </authorList>
    </citation>
    <scope>GENOME REANNOTATION</scope>
    <source>
        <strain>cv. Columbia</strain>
    </source>
</reference>
<reference key="4">
    <citation type="journal article" date="2003" name="Science">
        <title>Empirical analysis of transcriptional activity in the Arabidopsis genome.</title>
        <authorList>
            <person name="Yamada K."/>
            <person name="Lim J."/>
            <person name="Dale J.M."/>
            <person name="Chen H."/>
            <person name="Shinn P."/>
            <person name="Palm C.J."/>
            <person name="Southwick A.M."/>
            <person name="Wu H.C."/>
            <person name="Kim C.J."/>
            <person name="Nguyen M."/>
            <person name="Pham P.K."/>
            <person name="Cheuk R.F."/>
            <person name="Karlin-Newmann G."/>
            <person name="Liu S.X."/>
            <person name="Lam B."/>
            <person name="Sakano H."/>
            <person name="Wu T."/>
            <person name="Yu G."/>
            <person name="Miranda M."/>
            <person name="Quach H.L."/>
            <person name="Tripp M."/>
            <person name="Chang C.H."/>
            <person name="Lee J.M."/>
            <person name="Toriumi M.J."/>
            <person name="Chan M.M."/>
            <person name="Tang C.C."/>
            <person name="Onodera C.S."/>
            <person name="Deng J.M."/>
            <person name="Akiyama K."/>
            <person name="Ansari Y."/>
            <person name="Arakawa T."/>
            <person name="Banh J."/>
            <person name="Banno F."/>
            <person name="Bowser L."/>
            <person name="Brooks S.Y."/>
            <person name="Carninci P."/>
            <person name="Chao Q."/>
            <person name="Choy N."/>
            <person name="Enju A."/>
            <person name="Goldsmith A.D."/>
            <person name="Gurjal M."/>
            <person name="Hansen N.F."/>
            <person name="Hayashizaki Y."/>
            <person name="Johnson-Hopson C."/>
            <person name="Hsuan V.W."/>
            <person name="Iida K."/>
            <person name="Karnes M."/>
            <person name="Khan S."/>
            <person name="Koesema E."/>
            <person name="Ishida J."/>
            <person name="Jiang P.X."/>
            <person name="Jones T."/>
            <person name="Kawai J."/>
            <person name="Kamiya A."/>
            <person name="Meyers C."/>
            <person name="Nakajima M."/>
            <person name="Narusaka M."/>
            <person name="Seki M."/>
            <person name="Sakurai T."/>
            <person name="Satou M."/>
            <person name="Tamse R."/>
            <person name="Vaysberg M."/>
            <person name="Wallender E.K."/>
            <person name="Wong C."/>
            <person name="Yamamura Y."/>
            <person name="Yuan S."/>
            <person name="Shinozaki K."/>
            <person name="Davis R.W."/>
            <person name="Theologis A."/>
            <person name="Ecker J.R."/>
        </authorList>
    </citation>
    <scope>NUCLEOTIDE SEQUENCE [LARGE SCALE MRNA]</scope>
    <source>
        <strain>cv. Columbia</strain>
    </source>
</reference>
<sequence length="444" mass="49823">MREILHIQGGQCGNQIGAKFWEVICDEHGIDHTGQYVGDSPLQLERIDVYFNEASGGKYVPRAVLMDLEPGTMDSLRSGPFGQIFRPDNFVFGQSGAGNNWAKGHYTEGAELIDSVLDVVRKEAENSDCLQGFQVCHSLGGGTGSGMGTLLISKIREEYPDRMMMTFSVFPSPKVSDTVVEPYNATLSVHQLVENADECMVLDNEALYDICFRTLKLANPTFGDLNHLISATMSGVTCCLRFPGQLNSDLRKLAVNLIPFPRLHFFMVGFAPLTSRGSQQYSALSVPELTQQMWDAKNMMCAADPRHGRYLTASAVFRGKLSTKEVDEQMMNIQNKNSSYFVEWIPNNVKSSVCDIAPKGLKMASTFIGNSTSIQEMFRRVSEQFTAMFRRKAFLHWYTGEGMDEMEFTEAESNMNDLVAEYQQYQDATAGEEEYEEEEEEYET</sequence>
<evidence type="ECO:0000250" key="1">
    <source>
        <dbReference type="UniProtKB" id="P68363"/>
    </source>
</evidence>
<evidence type="ECO:0000250" key="2">
    <source>
        <dbReference type="UniProtKB" id="Q13509"/>
    </source>
</evidence>
<evidence type="ECO:0000305" key="3"/>
<dbReference type="EMBL" id="M21415">
    <property type="protein sequence ID" value="AAA32757.1"/>
    <property type="molecule type" value="Genomic_DNA"/>
</dbReference>
<dbReference type="EMBL" id="AB011475">
    <property type="protein sequence ID" value="BAB10119.1"/>
    <property type="molecule type" value="Genomic_DNA"/>
</dbReference>
<dbReference type="EMBL" id="CP002688">
    <property type="protein sequence ID" value="AED95098.1"/>
    <property type="molecule type" value="Genomic_DNA"/>
</dbReference>
<dbReference type="EMBL" id="AY059075">
    <property type="protein sequence ID" value="AAL15181.1"/>
    <property type="molecule type" value="mRNA"/>
</dbReference>
<dbReference type="EMBL" id="AY035141">
    <property type="protein sequence ID" value="AAK59645.1"/>
    <property type="molecule type" value="mRNA"/>
</dbReference>
<dbReference type="PIR" id="S68122">
    <property type="entry name" value="S68122"/>
</dbReference>
<dbReference type="RefSeq" id="NP_199247.1">
    <property type="nucleotide sequence ID" value="NM_123801.2"/>
</dbReference>
<dbReference type="SMR" id="P24636"/>
<dbReference type="BioGRID" id="19709">
    <property type="interactions" value="5"/>
</dbReference>
<dbReference type="FunCoup" id="P24636">
    <property type="interactions" value="2017"/>
</dbReference>
<dbReference type="IntAct" id="P24636">
    <property type="interactions" value="3"/>
</dbReference>
<dbReference type="MINT" id="P24636"/>
<dbReference type="STRING" id="3702.P24636"/>
<dbReference type="iPTMnet" id="P24636"/>
<dbReference type="MetOSite" id="P24636"/>
<dbReference type="PaxDb" id="3702-AT5G44340.1"/>
<dbReference type="ProteomicsDB" id="234156"/>
<dbReference type="EnsemblPlants" id="AT5G44340.1">
    <property type="protein sequence ID" value="AT5G44340.1"/>
    <property type="gene ID" value="AT5G44340"/>
</dbReference>
<dbReference type="GeneID" id="834459"/>
<dbReference type="Gramene" id="AT5G44340.1">
    <property type="protein sequence ID" value="AT5G44340.1"/>
    <property type="gene ID" value="AT5G44340"/>
</dbReference>
<dbReference type="KEGG" id="ath:AT5G44340"/>
<dbReference type="Araport" id="AT5G44340"/>
<dbReference type="TAIR" id="AT5G44340">
    <property type="gene designation" value="TUB4"/>
</dbReference>
<dbReference type="eggNOG" id="KOG1375">
    <property type="taxonomic scope" value="Eukaryota"/>
</dbReference>
<dbReference type="HOGENOM" id="CLU_015718_1_1_1"/>
<dbReference type="InParanoid" id="P24636"/>
<dbReference type="OMA" id="RERNICF"/>
<dbReference type="OrthoDB" id="1040402at2759"/>
<dbReference type="PhylomeDB" id="P24636"/>
<dbReference type="PRO" id="PR:P24636"/>
<dbReference type="Proteomes" id="UP000006548">
    <property type="component" value="Chromosome 5"/>
</dbReference>
<dbReference type="ExpressionAtlas" id="P24636">
    <property type="expression patterns" value="baseline and differential"/>
</dbReference>
<dbReference type="GO" id="GO:0009570">
    <property type="term" value="C:chloroplast stroma"/>
    <property type="evidence" value="ECO:0007005"/>
    <property type="project" value="TAIR"/>
</dbReference>
<dbReference type="GO" id="GO:0005829">
    <property type="term" value="C:cytosol"/>
    <property type="evidence" value="ECO:0007005"/>
    <property type="project" value="TAIR"/>
</dbReference>
<dbReference type="GO" id="GO:0005794">
    <property type="term" value="C:Golgi apparatus"/>
    <property type="evidence" value="ECO:0007005"/>
    <property type="project" value="TAIR"/>
</dbReference>
<dbReference type="GO" id="GO:0005874">
    <property type="term" value="C:microtubule"/>
    <property type="evidence" value="ECO:0007669"/>
    <property type="project" value="UniProtKB-KW"/>
</dbReference>
<dbReference type="GO" id="GO:0009505">
    <property type="term" value="C:plant-type cell wall"/>
    <property type="evidence" value="ECO:0007005"/>
    <property type="project" value="TAIR"/>
</dbReference>
<dbReference type="GO" id="GO:0005886">
    <property type="term" value="C:plasma membrane"/>
    <property type="evidence" value="ECO:0007005"/>
    <property type="project" value="TAIR"/>
</dbReference>
<dbReference type="GO" id="GO:0009506">
    <property type="term" value="C:plasmodesma"/>
    <property type="evidence" value="ECO:0007005"/>
    <property type="project" value="TAIR"/>
</dbReference>
<dbReference type="GO" id="GO:0009536">
    <property type="term" value="C:plastid"/>
    <property type="evidence" value="ECO:0007005"/>
    <property type="project" value="TAIR"/>
</dbReference>
<dbReference type="GO" id="GO:0045298">
    <property type="term" value="C:tubulin complex"/>
    <property type="evidence" value="ECO:0000250"/>
    <property type="project" value="TAIR"/>
</dbReference>
<dbReference type="GO" id="GO:0005525">
    <property type="term" value="F:GTP binding"/>
    <property type="evidence" value="ECO:0007669"/>
    <property type="project" value="UniProtKB-KW"/>
</dbReference>
<dbReference type="GO" id="GO:0003924">
    <property type="term" value="F:GTPase activity"/>
    <property type="evidence" value="ECO:0007669"/>
    <property type="project" value="InterPro"/>
</dbReference>
<dbReference type="GO" id="GO:0046872">
    <property type="term" value="F:metal ion binding"/>
    <property type="evidence" value="ECO:0007669"/>
    <property type="project" value="UniProtKB-KW"/>
</dbReference>
<dbReference type="GO" id="GO:0003729">
    <property type="term" value="F:mRNA binding"/>
    <property type="evidence" value="ECO:0000314"/>
    <property type="project" value="TAIR"/>
</dbReference>
<dbReference type="GO" id="GO:0005200">
    <property type="term" value="F:structural constituent of cytoskeleton"/>
    <property type="evidence" value="ECO:0000250"/>
    <property type="project" value="TAIR"/>
</dbReference>
<dbReference type="GO" id="GO:0007017">
    <property type="term" value="P:microtubule-based process"/>
    <property type="evidence" value="ECO:0007669"/>
    <property type="project" value="InterPro"/>
</dbReference>
<dbReference type="CDD" id="cd02187">
    <property type="entry name" value="beta_tubulin"/>
    <property type="match status" value="1"/>
</dbReference>
<dbReference type="FunFam" id="1.10.287.600:FF:000002">
    <property type="entry name" value="Tubulin beta chain"/>
    <property type="match status" value="1"/>
</dbReference>
<dbReference type="FunFam" id="3.30.1330.20:FF:000002">
    <property type="entry name" value="Tubulin beta chain"/>
    <property type="match status" value="1"/>
</dbReference>
<dbReference type="FunFam" id="3.40.50.1440:FF:000005">
    <property type="entry name" value="Tubulin beta chain"/>
    <property type="match status" value="1"/>
</dbReference>
<dbReference type="Gene3D" id="1.10.287.600">
    <property type="entry name" value="Helix hairpin bin"/>
    <property type="match status" value="1"/>
</dbReference>
<dbReference type="Gene3D" id="3.30.1330.20">
    <property type="entry name" value="Tubulin/FtsZ, C-terminal domain"/>
    <property type="match status" value="1"/>
</dbReference>
<dbReference type="Gene3D" id="3.40.50.1440">
    <property type="entry name" value="Tubulin/FtsZ, GTPase domain"/>
    <property type="match status" value="1"/>
</dbReference>
<dbReference type="InterPro" id="IPR013838">
    <property type="entry name" value="Beta-tubulin_BS"/>
</dbReference>
<dbReference type="InterPro" id="IPR002453">
    <property type="entry name" value="Beta_tubulin"/>
</dbReference>
<dbReference type="InterPro" id="IPR008280">
    <property type="entry name" value="Tub_FtsZ_C"/>
</dbReference>
<dbReference type="InterPro" id="IPR000217">
    <property type="entry name" value="Tubulin"/>
</dbReference>
<dbReference type="InterPro" id="IPR037103">
    <property type="entry name" value="Tubulin/FtsZ-like_C"/>
</dbReference>
<dbReference type="InterPro" id="IPR018316">
    <property type="entry name" value="Tubulin/FtsZ_2-layer-sand-dom"/>
</dbReference>
<dbReference type="InterPro" id="IPR036525">
    <property type="entry name" value="Tubulin/FtsZ_GTPase_sf"/>
</dbReference>
<dbReference type="InterPro" id="IPR023123">
    <property type="entry name" value="Tubulin_C"/>
</dbReference>
<dbReference type="InterPro" id="IPR017975">
    <property type="entry name" value="Tubulin_CS"/>
</dbReference>
<dbReference type="InterPro" id="IPR003008">
    <property type="entry name" value="Tubulin_FtsZ_GTPase"/>
</dbReference>
<dbReference type="PANTHER" id="PTHR11588">
    <property type="entry name" value="TUBULIN"/>
    <property type="match status" value="1"/>
</dbReference>
<dbReference type="Pfam" id="PF00091">
    <property type="entry name" value="Tubulin"/>
    <property type="match status" value="1"/>
</dbReference>
<dbReference type="Pfam" id="PF03953">
    <property type="entry name" value="Tubulin_C"/>
    <property type="match status" value="1"/>
</dbReference>
<dbReference type="PRINTS" id="PR01163">
    <property type="entry name" value="BETATUBULIN"/>
</dbReference>
<dbReference type="PRINTS" id="PR01161">
    <property type="entry name" value="TUBULIN"/>
</dbReference>
<dbReference type="SMART" id="SM00864">
    <property type="entry name" value="Tubulin"/>
    <property type="match status" value="1"/>
</dbReference>
<dbReference type="SMART" id="SM00865">
    <property type="entry name" value="Tubulin_C"/>
    <property type="match status" value="1"/>
</dbReference>
<dbReference type="SUPFAM" id="SSF55307">
    <property type="entry name" value="Tubulin C-terminal domain-like"/>
    <property type="match status" value="1"/>
</dbReference>
<dbReference type="SUPFAM" id="SSF52490">
    <property type="entry name" value="Tubulin nucleotide-binding domain-like"/>
    <property type="match status" value="1"/>
</dbReference>
<dbReference type="PROSITE" id="PS00227">
    <property type="entry name" value="TUBULIN"/>
    <property type="match status" value="1"/>
</dbReference>
<dbReference type="PROSITE" id="PS00228">
    <property type="entry name" value="TUBULIN_B_AUTOREG"/>
    <property type="match status" value="1"/>
</dbReference>
<name>TBB4_ARATH</name>
<protein>
    <recommendedName>
        <fullName>Tubulin beta-4 chain</fullName>
    </recommendedName>
    <alternativeName>
        <fullName>Beta-4-tubulin</fullName>
    </alternativeName>
</protein>
<organism>
    <name type="scientific">Arabidopsis thaliana</name>
    <name type="common">Mouse-ear cress</name>
    <dbReference type="NCBI Taxonomy" id="3702"/>
    <lineage>
        <taxon>Eukaryota</taxon>
        <taxon>Viridiplantae</taxon>
        <taxon>Streptophyta</taxon>
        <taxon>Embryophyta</taxon>
        <taxon>Tracheophyta</taxon>
        <taxon>Spermatophyta</taxon>
        <taxon>Magnoliopsida</taxon>
        <taxon>eudicotyledons</taxon>
        <taxon>Gunneridae</taxon>
        <taxon>Pentapetalae</taxon>
        <taxon>rosids</taxon>
        <taxon>malvids</taxon>
        <taxon>Brassicales</taxon>
        <taxon>Brassicaceae</taxon>
        <taxon>Camelineae</taxon>
        <taxon>Arabidopsis</taxon>
    </lineage>
</organism>